<organism>
    <name type="scientific">Listeria innocua serovar 6a (strain ATCC BAA-680 / CLIP 11262)</name>
    <dbReference type="NCBI Taxonomy" id="272626"/>
    <lineage>
        <taxon>Bacteria</taxon>
        <taxon>Bacillati</taxon>
        <taxon>Bacillota</taxon>
        <taxon>Bacilli</taxon>
        <taxon>Bacillales</taxon>
        <taxon>Listeriaceae</taxon>
        <taxon>Listeria</taxon>
    </lineage>
</organism>
<proteinExistence type="inferred from homology"/>
<keyword id="KW-0648">Protein biosynthesis</keyword>
<keyword id="KW-0808">Transferase</keyword>
<comment type="function">
    <text evidence="1">Attaches a formyl group to the free amino group of methionyl-tRNA(fMet). The formyl group appears to play a dual role in the initiator identity of N-formylmethionyl-tRNA by promoting its recognition by IF2 and preventing the misappropriation of this tRNA by the elongation apparatus.</text>
</comment>
<comment type="catalytic activity">
    <reaction evidence="1">
        <text>L-methionyl-tRNA(fMet) + (6R)-10-formyltetrahydrofolate = N-formyl-L-methionyl-tRNA(fMet) + (6S)-5,6,7,8-tetrahydrofolate + H(+)</text>
        <dbReference type="Rhea" id="RHEA:24380"/>
        <dbReference type="Rhea" id="RHEA-COMP:9952"/>
        <dbReference type="Rhea" id="RHEA-COMP:9953"/>
        <dbReference type="ChEBI" id="CHEBI:15378"/>
        <dbReference type="ChEBI" id="CHEBI:57453"/>
        <dbReference type="ChEBI" id="CHEBI:78530"/>
        <dbReference type="ChEBI" id="CHEBI:78844"/>
        <dbReference type="ChEBI" id="CHEBI:195366"/>
        <dbReference type="EC" id="2.1.2.9"/>
    </reaction>
</comment>
<comment type="similarity">
    <text evidence="1">Belongs to the Fmt family.</text>
</comment>
<name>FMT_LISIN</name>
<protein>
    <recommendedName>
        <fullName evidence="1">Methionyl-tRNA formyltransferase</fullName>
        <ecNumber evidence="1">2.1.2.9</ecNumber>
    </recommendedName>
</protein>
<evidence type="ECO:0000255" key="1">
    <source>
        <dbReference type="HAMAP-Rule" id="MF_00182"/>
    </source>
</evidence>
<feature type="chain" id="PRO_0000082987" description="Methionyl-tRNA formyltransferase">
    <location>
        <begin position="1"/>
        <end position="312"/>
    </location>
</feature>
<feature type="binding site" evidence="1">
    <location>
        <begin position="109"/>
        <end position="112"/>
    </location>
    <ligand>
        <name>(6S)-5,6,7,8-tetrahydrofolate</name>
        <dbReference type="ChEBI" id="CHEBI:57453"/>
    </ligand>
</feature>
<accession>Q92AI5</accession>
<dbReference type="EC" id="2.1.2.9" evidence="1"/>
<dbReference type="EMBL" id="AL596170">
    <property type="protein sequence ID" value="CAC97167.1"/>
    <property type="molecule type" value="Genomic_DNA"/>
</dbReference>
<dbReference type="PIR" id="AG1674">
    <property type="entry name" value="AG1674"/>
</dbReference>
<dbReference type="RefSeq" id="WP_003762938.1">
    <property type="nucleotide sequence ID" value="NC_003212.1"/>
</dbReference>
<dbReference type="SMR" id="Q92AI5"/>
<dbReference type="STRING" id="272626.gene:17566295"/>
<dbReference type="KEGG" id="lin:fmt"/>
<dbReference type="eggNOG" id="COG0223">
    <property type="taxonomic scope" value="Bacteria"/>
</dbReference>
<dbReference type="HOGENOM" id="CLU_033347_1_1_9"/>
<dbReference type="OrthoDB" id="9802815at2"/>
<dbReference type="Proteomes" id="UP000002513">
    <property type="component" value="Chromosome"/>
</dbReference>
<dbReference type="GO" id="GO:0005829">
    <property type="term" value="C:cytosol"/>
    <property type="evidence" value="ECO:0007669"/>
    <property type="project" value="TreeGrafter"/>
</dbReference>
<dbReference type="GO" id="GO:0004479">
    <property type="term" value="F:methionyl-tRNA formyltransferase activity"/>
    <property type="evidence" value="ECO:0007669"/>
    <property type="project" value="UniProtKB-UniRule"/>
</dbReference>
<dbReference type="CDD" id="cd08646">
    <property type="entry name" value="FMT_core_Met-tRNA-FMT_N"/>
    <property type="match status" value="1"/>
</dbReference>
<dbReference type="CDD" id="cd08704">
    <property type="entry name" value="Met_tRNA_FMT_C"/>
    <property type="match status" value="1"/>
</dbReference>
<dbReference type="FunFam" id="3.40.50.12230:FF:000001">
    <property type="entry name" value="Methionyl-tRNA formyltransferase"/>
    <property type="match status" value="1"/>
</dbReference>
<dbReference type="FunFam" id="3.40.50.170:FF:000004">
    <property type="entry name" value="Methionyl-tRNA formyltransferase"/>
    <property type="match status" value="1"/>
</dbReference>
<dbReference type="Gene3D" id="3.40.50.12230">
    <property type="match status" value="1"/>
</dbReference>
<dbReference type="HAMAP" id="MF_00182">
    <property type="entry name" value="Formyl_trans"/>
    <property type="match status" value="1"/>
</dbReference>
<dbReference type="InterPro" id="IPR005794">
    <property type="entry name" value="Fmt"/>
</dbReference>
<dbReference type="InterPro" id="IPR005793">
    <property type="entry name" value="Formyl_trans_C"/>
</dbReference>
<dbReference type="InterPro" id="IPR002376">
    <property type="entry name" value="Formyl_transf_N"/>
</dbReference>
<dbReference type="InterPro" id="IPR036477">
    <property type="entry name" value="Formyl_transf_N_sf"/>
</dbReference>
<dbReference type="InterPro" id="IPR011034">
    <property type="entry name" value="Formyl_transferase-like_C_sf"/>
</dbReference>
<dbReference type="InterPro" id="IPR001555">
    <property type="entry name" value="GART_AS"/>
</dbReference>
<dbReference type="InterPro" id="IPR044135">
    <property type="entry name" value="Met-tRNA-FMT_C"/>
</dbReference>
<dbReference type="InterPro" id="IPR041711">
    <property type="entry name" value="Met-tRNA-FMT_N"/>
</dbReference>
<dbReference type="NCBIfam" id="TIGR00460">
    <property type="entry name" value="fmt"/>
    <property type="match status" value="1"/>
</dbReference>
<dbReference type="PANTHER" id="PTHR11138">
    <property type="entry name" value="METHIONYL-TRNA FORMYLTRANSFERASE"/>
    <property type="match status" value="1"/>
</dbReference>
<dbReference type="PANTHER" id="PTHR11138:SF5">
    <property type="entry name" value="METHIONYL-TRNA FORMYLTRANSFERASE, MITOCHONDRIAL"/>
    <property type="match status" value="1"/>
</dbReference>
<dbReference type="Pfam" id="PF02911">
    <property type="entry name" value="Formyl_trans_C"/>
    <property type="match status" value="1"/>
</dbReference>
<dbReference type="Pfam" id="PF00551">
    <property type="entry name" value="Formyl_trans_N"/>
    <property type="match status" value="1"/>
</dbReference>
<dbReference type="SUPFAM" id="SSF50486">
    <property type="entry name" value="FMT C-terminal domain-like"/>
    <property type="match status" value="1"/>
</dbReference>
<dbReference type="SUPFAM" id="SSF53328">
    <property type="entry name" value="Formyltransferase"/>
    <property type="match status" value="1"/>
</dbReference>
<dbReference type="PROSITE" id="PS00373">
    <property type="entry name" value="GART"/>
    <property type="match status" value="1"/>
</dbReference>
<reference key="1">
    <citation type="journal article" date="2001" name="Science">
        <title>Comparative genomics of Listeria species.</title>
        <authorList>
            <person name="Glaser P."/>
            <person name="Frangeul L."/>
            <person name="Buchrieser C."/>
            <person name="Rusniok C."/>
            <person name="Amend A."/>
            <person name="Baquero F."/>
            <person name="Berche P."/>
            <person name="Bloecker H."/>
            <person name="Brandt P."/>
            <person name="Chakraborty T."/>
            <person name="Charbit A."/>
            <person name="Chetouani F."/>
            <person name="Couve E."/>
            <person name="de Daruvar A."/>
            <person name="Dehoux P."/>
            <person name="Domann E."/>
            <person name="Dominguez-Bernal G."/>
            <person name="Duchaud E."/>
            <person name="Durant L."/>
            <person name="Dussurget O."/>
            <person name="Entian K.-D."/>
            <person name="Fsihi H."/>
            <person name="Garcia-del Portillo F."/>
            <person name="Garrido P."/>
            <person name="Gautier L."/>
            <person name="Goebel W."/>
            <person name="Gomez-Lopez N."/>
            <person name="Hain T."/>
            <person name="Hauf J."/>
            <person name="Jackson D."/>
            <person name="Jones L.-M."/>
            <person name="Kaerst U."/>
            <person name="Kreft J."/>
            <person name="Kuhn M."/>
            <person name="Kunst F."/>
            <person name="Kurapkat G."/>
            <person name="Madueno E."/>
            <person name="Maitournam A."/>
            <person name="Mata Vicente J."/>
            <person name="Ng E."/>
            <person name="Nedjari H."/>
            <person name="Nordsiek G."/>
            <person name="Novella S."/>
            <person name="de Pablos B."/>
            <person name="Perez-Diaz J.-C."/>
            <person name="Purcell R."/>
            <person name="Remmel B."/>
            <person name="Rose M."/>
            <person name="Schlueter T."/>
            <person name="Simoes N."/>
            <person name="Tierrez A."/>
            <person name="Vazquez-Boland J.-A."/>
            <person name="Voss H."/>
            <person name="Wehland J."/>
            <person name="Cossart P."/>
        </authorList>
    </citation>
    <scope>NUCLEOTIDE SEQUENCE [LARGE SCALE GENOMIC DNA]</scope>
    <source>
        <strain>ATCC BAA-680 / CLIP 11262</strain>
    </source>
</reference>
<sequence length="312" mass="34160">MTKIIFMGTPAFSVPVLEQLASAYDVIAVVTQPDRPVGRKRILTPPPVKKAALELGIPVYQPEKLRTSSELEELISLEADLLVTAAYGQILPNTLLESPKHGAINVHASLLPEYRGGAPVHYALLDGKTETGVTIMYMVEKLDAGDMISQRKIPITEEDNTGTMFDKLSKLGAELLMDTLPDFLAGKITAVAQDPEKVTFARNISREQEKINWTKPGRTIFNQIRGLSPWPVAYTTLEEKPFKIWEATFEDTKTSGEPGTILTDKSTLKIVAGDGTLIVPTVIQPAGKPKMDIHSFMSGAGRNLSKTTRFGE</sequence>
<gene>
    <name evidence="1" type="primary">fmt</name>
    <name type="ordered locus">lin1937</name>
</gene>